<sequence length="141" mass="15101">MASFQCDIVSAEKAIFSGSAEQLIAAGVSGDLGILRGHAPLLTELKPGPVRVMREGGEEEVYYVTGGFLEVQPDVVSVLADTATRAHDLDEAAAEEARQEALKAMGDKQSDLDYTRAAAELAEAVAQLRTIQQLREKGSRR</sequence>
<comment type="function">
    <text evidence="1">Produces ATP from ADP in the presence of a proton gradient across the membrane.</text>
</comment>
<comment type="subunit">
    <text>F-type ATPases have 2 components, CF(1) - the catalytic core - and CF(0) - the membrane proton channel. CF(1) has five subunits: alpha(3), beta(3), gamma(1), delta(1), epsilon(1). CF(0) has three main subunits: a, b and c.</text>
</comment>
<comment type="subcellular location">
    <subcellularLocation>
        <location evidence="1">Cell inner membrane</location>
        <topology evidence="1">Peripheral membrane protein</topology>
    </subcellularLocation>
</comment>
<comment type="similarity">
    <text evidence="1">Belongs to the ATPase epsilon chain family.</text>
</comment>
<reference key="1">
    <citation type="journal article" date="2011" name="Stand. Genomic Sci.">
        <title>Complete genome sequence of the halophilic and highly halotolerant Chromohalobacter salexigens type strain (1H11(T)).</title>
        <authorList>
            <person name="Copeland A."/>
            <person name="O'Connor K."/>
            <person name="Lucas S."/>
            <person name="Lapidus A."/>
            <person name="Berry K.W."/>
            <person name="Detter J.C."/>
            <person name="Del Rio T.G."/>
            <person name="Hammon N."/>
            <person name="Dalin E."/>
            <person name="Tice H."/>
            <person name="Pitluck S."/>
            <person name="Bruce D."/>
            <person name="Goodwin L."/>
            <person name="Han C."/>
            <person name="Tapia R."/>
            <person name="Saunders E."/>
            <person name="Schmutz J."/>
            <person name="Brettin T."/>
            <person name="Larimer F."/>
            <person name="Land M."/>
            <person name="Hauser L."/>
            <person name="Vargas C."/>
            <person name="Nieto J.J."/>
            <person name="Kyrpides N.C."/>
            <person name="Ivanova N."/>
            <person name="Goker M."/>
            <person name="Klenk H.P."/>
            <person name="Csonka L.N."/>
            <person name="Woyke T."/>
        </authorList>
    </citation>
    <scope>NUCLEOTIDE SEQUENCE [LARGE SCALE GENOMIC DNA]</scope>
    <source>
        <strain>ATCC BAA-138 / DSM 3043 / CIP 106854 / NCIMB 13768 / 1H11</strain>
    </source>
</reference>
<feature type="chain" id="PRO_0000265800" description="ATP synthase epsilon chain">
    <location>
        <begin position="1"/>
        <end position="141"/>
    </location>
</feature>
<name>ATPE_CHRSD</name>
<accession>Q1QSD1</accession>
<keyword id="KW-0066">ATP synthesis</keyword>
<keyword id="KW-0997">Cell inner membrane</keyword>
<keyword id="KW-1003">Cell membrane</keyword>
<keyword id="KW-0139">CF(1)</keyword>
<keyword id="KW-0375">Hydrogen ion transport</keyword>
<keyword id="KW-0406">Ion transport</keyword>
<keyword id="KW-0472">Membrane</keyword>
<keyword id="KW-1185">Reference proteome</keyword>
<keyword id="KW-0813">Transport</keyword>
<dbReference type="EMBL" id="CP000285">
    <property type="protein sequence ID" value="ABE60627.1"/>
    <property type="molecule type" value="Genomic_DNA"/>
</dbReference>
<dbReference type="RefSeq" id="WP_011508573.1">
    <property type="nucleotide sequence ID" value="NC_007963.1"/>
</dbReference>
<dbReference type="SMR" id="Q1QSD1"/>
<dbReference type="STRING" id="290398.Csal_3283"/>
<dbReference type="GeneID" id="95335974"/>
<dbReference type="KEGG" id="csa:Csal_3283"/>
<dbReference type="eggNOG" id="COG0355">
    <property type="taxonomic scope" value="Bacteria"/>
</dbReference>
<dbReference type="HOGENOM" id="CLU_084338_2_0_6"/>
<dbReference type="OrthoDB" id="9791445at2"/>
<dbReference type="Proteomes" id="UP000000239">
    <property type="component" value="Chromosome"/>
</dbReference>
<dbReference type="GO" id="GO:0005886">
    <property type="term" value="C:plasma membrane"/>
    <property type="evidence" value="ECO:0007669"/>
    <property type="project" value="UniProtKB-SubCell"/>
</dbReference>
<dbReference type="GO" id="GO:0045259">
    <property type="term" value="C:proton-transporting ATP synthase complex"/>
    <property type="evidence" value="ECO:0007669"/>
    <property type="project" value="UniProtKB-KW"/>
</dbReference>
<dbReference type="GO" id="GO:0005524">
    <property type="term" value="F:ATP binding"/>
    <property type="evidence" value="ECO:0007669"/>
    <property type="project" value="UniProtKB-UniRule"/>
</dbReference>
<dbReference type="GO" id="GO:0046933">
    <property type="term" value="F:proton-transporting ATP synthase activity, rotational mechanism"/>
    <property type="evidence" value="ECO:0007669"/>
    <property type="project" value="UniProtKB-UniRule"/>
</dbReference>
<dbReference type="CDD" id="cd12152">
    <property type="entry name" value="F1-ATPase_delta"/>
    <property type="match status" value="1"/>
</dbReference>
<dbReference type="FunFam" id="2.60.15.10:FF:000001">
    <property type="entry name" value="ATP synthase epsilon chain"/>
    <property type="match status" value="1"/>
</dbReference>
<dbReference type="Gene3D" id="1.20.5.440">
    <property type="entry name" value="ATP synthase delta/epsilon subunit, C-terminal domain"/>
    <property type="match status" value="1"/>
</dbReference>
<dbReference type="Gene3D" id="2.60.15.10">
    <property type="entry name" value="F0F1 ATP synthase delta/epsilon subunit, N-terminal"/>
    <property type="match status" value="1"/>
</dbReference>
<dbReference type="HAMAP" id="MF_00530">
    <property type="entry name" value="ATP_synth_epsil_bac"/>
    <property type="match status" value="1"/>
</dbReference>
<dbReference type="InterPro" id="IPR036794">
    <property type="entry name" value="ATP_F1_dsu/esu_C_sf"/>
</dbReference>
<dbReference type="InterPro" id="IPR001469">
    <property type="entry name" value="ATP_synth_F1_dsu/esu"/>
</dbReference>
<dbReference type="InterPro" id="IPR020546">
    <property type="entry name" value="ATP_synth_F1_dsu/esu_N"/>
</dbReference>
<dbReference type="InterPro" id="IPR020547">
    <property type="entry name" value="ATP_synth_F1_esu_C"/>
</dbReference>
<dbReference type="InterPro" id="IPR036771">
    <property type="entry name" value="ATPsynth_dsu/esu_N"/>
</dbReference>
<dbReference type="NCBIfam" id="TIGR01216">
    <property type="entry name" value="ATP_synt_epsi"/>
    <property type="match status" value="1"/>
</dbReference>
<dbReference type="NCBIfam" id="NF001847">
    <property type="entry name" value="PRK00571.1-4"/>
    <property type="match status" value="1"/>
</dbReference>
<dbReference type="NCBIfam" id="NF009977">
    <property type="entry name" value="PRK13442.1"/>
    <property type="match status" value="1"/>
</dbReference>
<dbReference type="PANTHER" id="PTHR13822">
    <property type="entry name" value="ATP SYNTHASE DELTA/EPSILON CHAIN"/>
    <property type="match status" value="1"/>
</dbReference>
<dbReference type="PANTHER" id="PTHR13822:SF10">
    <property type="entry name" value="ATP SYNTHASE EPSILON CHAIN, CHLOROPLASTIC"/>
    <property type="match status" value="1"/>
</dbReference>
<dbReference type="Pfam" id="PF00401">
    <property type="entry name" value="ATP-synt_DE"/>
    <property type="match status" value="1"/>
</dbReference>
<dbReference type="Pfam" id="PF02823">
    <property type="entry name" value="ATP-synt_DE_N"/>
    <property type="match status" value="1"/>
</dbReference>
<dbReference type="SUPFAM" id="SSF46604">
    <property type="entry name" value="Epsilon subunit of F1F0-ATP synthase C-terminal domain"/>
    <property type="match status" value="1"/>
</dbReference>
<dbReference type="SUPFAM" id="SSF51344">
    <property type="entry name" value="Epsilon subunit of F1F0-ATP synthase N-terminal domain"/>
    <property type="match status" value="1"/>
</dbReference>
<proteinExistence type="inferred from homology"/>
<organism>
    <name type="scientific">Chromohalobacter salexigens (strain ATCC BAA-138 / DSM 3043 / CIP 106854 / NCIMB 13768 / 1H11)</name>
    <dbReference type="NCBI Taxonomy" id="290398"/>
    <lineage>
        <taxon>Bacteria</taxon>
        <taxon>Pseudomonadati</taxon>
        <taxon>Pseudomonadota</taxon>
        <taxon>Gammaproteobacteria</taxon>
        <taxon>Oceanospirillales</taxon>
        <taxon>Halomonadaceae</taxon>
        <taxon>Chromohalobacter</taxon>
    </lineage>
</organism>
<evidence type="ECO:0000255" key="1">
    <source>
        <dbReference type="HAMAP-Rule" id="MF_00530"/>
    </source>
</evidence>
<protein>
    <recommendedName>
        <fullName evidence="1">ATP synthase epsilon chain</fullName>
    </recommendedName>
    <alternativeName>
        <fullName evidence="1">ATP synthase F1 sector epsilon subunit</fullName>
    </alternativeName>
    <alternativeName>
        <fullName evidence="1">F-ATPase epsilon subunit</fullName>
    </alternativeName>
</protein>
<gene>
    <name evidence="1" type="primary">atpC</name>
    <name type="ordered locus">Csal_3283</name>
</gene>